<accession>P83576</accession>
<dbReference type="EC" id="3.1.3.-"/>
<dbReference type="SABIO-RK" id="P83576"/>
<dbReference type="GO" id="GO:0005737">
    <property type="term" value="C:cytoplasm"/>
    <property type="evidence" value="ECO:0007669"/>
    <property type="project" value="UniProtKB-SubCell"/>
</dbReference>
<dbReference type="GO" id="GO:0016787">
    <property type="term" value="F:hydrolase activity"/>
    <property type="evidence" value="ECO:0007669"/>
    <property type="project" value="UniProtKB-KW"/>
</dbReference>
<proteinExistence type="evidence at protein level"/>
<reference key="1">
    <citation type="journal article" date="2004" name="J. Basic Microbiol.">
        <title>Cytosolic NADP phosphatases I and II from Arthrobacter sp. strain KM: implication in regulation of NAD+/NADP+ balance.</title>
        <authorList>
            <person name="Kawai S."/>
            <person name="Mori S."/>
            <person name="Mukai T."/>
            <person name="Murata K."/>
        </authorList>
    </citation>
    <scope>PROTEIN SEQUENCE</scope>
    <scope>SUBUNIT</scope>
    <scope>SUBCELLULAR LOCATION</scope>
</reference>
<sequence>SIPASQKANLGNQMIMAVACYQN</sequence>
<comment type="biophysicochemical properties">
    <phDependence>
        <text>Optimum pH is 7-8.</text>
    </phDependence>
</comment>
<comment type="subunit">
    <text evidence="1 2">Homodimer.</text>
</comment>
<comment type="subcellular location">
    <subcellularLocation>
        <location evidence="1">Cytoplasm</location>
    </subcellularLocation>
</comment>
<evidence type="ECO:0000269" key="1">
    <source>
    </source>
</evidence>
<evidence type="ECO:0000305" key="2"/>
<protein>
    <recommendedName>
        <fullName>NADP phosphatase 2</fullName>
        <ecNumber>3.1.3.-</ecNumber>
    </recommendedName>
    <alternativeName>
        <fullName>NADP phosphatase II</fullName>
    </alternativeName>
</protein>
<keyword id="KW-0963">Cytoplasm</keyword>
<keyword id="KW-0903">Direct protein sequencing</keyword>
<keyword id="KW-0378">Hydrolase</keyword>
<name>NDP2_ARTSK</name>
<feature type="chain" id="PRO_0000096771" description="NADP phosphatase 2">
    <location>
        <begin position="1"/>
        <end position="23" status="greater than"/>
    </location>
</feature>
<feature type="non-terminal residue" evidence="2">
    <location>
        <position position="23"/>
    </location>
</feature>
<organism evidence="2">
    <name type="scientific">Arthrobacter sp. (strain KM)</name>
    <dbReference type="NCBI Taxonomy" id="184230"/>
    <lineage>
        <taxon>Bacteria</taxon>
        <taxon>Bacillati</taxon>
        <taxon>Actinomycetota</taxon>
        <taxon>Actinomycetes</taxon>
        <taxon>Micrococcales</taxon>
        <taxon>Micrococcaceae</taxon>
        <taxon>Arthrobacter</taxon>
    </lineage>
</organism>